<gene>
    <name evidence="13 14" type="primary">pry-1</name>
    <name type="ORF">C37A5.9</name>
</gene>
<feature type="chain" id="PRO_0000347254" description="Axin-like protein pry-1">
    <location>
        <begin position="1"/>
        <end position="586"/>
    </location>
</feature>
<feature type="domain" description="RGS" evidence="2">
    <location>
        <begin position="10"/>
        <end position="131"/>
    </location>
</feature>
<feature type="domain" description="DIX" evidence="1">
    <location>
        <begin position="505"/>
        <end position="586"/>
    </location>
</feature>
<feature type="region of interest" description="Required for interaction with apr-1" evidence="4">
    <location>
        <begin position="1"/>
        <end position="135"/>
    </location>
</feature>
<feature type="region of interest" description="Disordered" evidence="3">
    <location>
        <begin position="137"/>
        <end position="168"/>
    </location>
</feature>
<feature type="region of interest" description="Disordered" evidence="3">
    <location>
        <begin position="344"/>
        <end position="442"/>
    </location>
</feature>
<feature type="region of interest" description="Disordered" evidence="3">
    <location>
        <begin position="478"/>
        <end position="501"/>
    </location>
</feature>
<feature type="compositionally biased region" description="Polar residues" evidence="3">
    <location>
        <begin position="151"/>
        <end position="168"/>
    </location>
</feature>
<feature type="compositionally biased region" description="Polar residues" evidence="3">
    <location>
        <begin position="368"/>
        <end position="388"/>
    </location>
</feature>
<feature type="compositionally biased region" description="Low complexity" evidence="3">
    <location>
        <begin position="421"/>
        <end position="442"/>
    </location>
</feature>
<feature type="compositionally biased region" description="Basic residues" evidence="3">
    <location>
        <begin position="486"/>
        <end position="501"/>
    </location>
</feature>
<name>PRY1_CAEEL</name>
<dbReference type="EMBL" id="AF468834">
    <property type="protein sequence ID" value="AAL77082.1"/>
    <property type="molecule type" value="mRNA"/>
</dbReference>
<dbReference type="EMBL" id="Z92828">
    <property type="protein sequence ID" value="CAB07332.2"/>
    <property type="molecule type" value="Genomic_DNA"/>
</dbReference>
<dbReference type="PIR" id="T19802">
    <property type="entry name" value="T19802"/>
</dbReference>
<dbReference type="RefSeq" id="NP_493474.2">
    <property type="nucleotide sequence ID" value="NM_061073.5"/>
</dbReference>
<dbReference type="SMR" id="O62090"/>
<dbReference type="BioGRID" id="38675">
    <property type="interactions" value="39"/>
</dbReference>
<dbReference type="FunCoup" id="O62090">
    <property type="interactions" value="91"/>
</dbReference>
<dbReference type="IntAct" id="O62090">
    <property type="interactions" value="14"/>
</dbReference>
<dbReference type="STRING" id="6239.C37A5.9.1"/>
<dbReference type="PaxDb" id="6239-C37A5.9"/>
<dbReference type="EnsemblMetazoa" id="C37A5.9.1">
    <property type="protein sequence ID" value="C37A5.9.1"/>
    <property type="gene ID" value="WBGene00004202"/>
</dbReference>
<dbReference type="GeneID" id="173287"/>
<dbReference type="KEGG" id="cel:CELE_C37A5.9"/>
<dbReference type="UCSC" id="C37A5.9.1">
    <property type="organism name" value="c. elegans"/>
</dbReference>
<dbReference type="AGR" id="WB:WBGene00004202"/>
<dbReference type="CTD" id="173287"/>
<dbReference type="WormBase" id="C37A5.9">
    <property type="protein sequence ID" value="CE30125"/>
    <property type="gene ID" value="WBGene00004202"/>
    <property type="gene designation" value="pry-1"/>
</dbReference>
<dbReference type="eggNOG" id="ENOG502S33C">
    <property type="taxonomic scope" value="Eukaryota"/>
</dbReference>
<dbReference type="HOGENOM" id="CLU_471192_0_0_1"/>
<dbReference type="InParanoid" id="O62090"/>
<dbReference type="OMA" id="CNATTSH"/>
<dbReference type="OrthoDB" id="10007451at2759"/>
<dbReference type="PhylomeDB" id="O62090"/>
<dbReference type="Reactome" id="R-CEL-195253">
    <property type="pathway name" value="Degradation of beta-catenin by the destruction complex"/>
</dbReference>
<dbReference type="Reactome" id="R-CEL-196299">
    <property type="pathway name" value="Beta-catenin phosphorylation cascade"/>
</dbReference>
<dbReference type="Reactome" id="R-CEL-4641262">
    <property type="pathway name" value="Disassembly of the destruction complex and recruitment of AXIN to the membrane"/>
</dbReference>
<dbReference type="SignaLink" id="O62090"/>
<dbReference type="PRO" id="PR:O62090"/>
<dbReference type="Proteomes" id="UP000001940">
    <property type="component" value="Chromosome I"/>
</dbReference>
<dbReference type="Bgee" id="WBGene00004202">
    <property type="expression patterns" value="Expressed in germ line (C elegans) and 4 other cell types or tissues"/>
</dbReference>
<dbReference type="GO" id="GO:0030877">
    <property type="term" value="C:beta-catenin destruction complex"/>
    <property type="evidence" value="ECO:0000314"/>
    <property type="project" value="WormBase"/>
</dbReference>
<dbReference type="GO" id="GO:0005938">
    <property type="term" value="C:cell cortex"/>
    <property type="evidence" value="ECO:0000314"/>
    <property type="project" value="WormBase"/>
</dbReference>
<dbReference type="GO" id="GO:0005737">
    <property type="term" value="C:cytoplasm"/>
    <property type="evidence" value="ECO:0000314"/>
    <property type="project" value="UniProtKB"/>
</dbReference>
<dbReference type="GO" id="GO:0016020">
    <property type="term" value="C:membrane"/>
    <property type="evidence" value="ECO:0000314"/>
    <property type="project" value="UniProtKB"/>
</dbReference>
<dbReference type="GO" id="GO:0005634">
    <property type="term" value="C:nucleus"/>
    <property type="evidence" value="ECO:0000314"/>
    <property type="project" value="UniProtKB"/>
</dbReference>
<dbReference type="GO" id="GO:0005886">
    <property type="term" value="C:plasma membrane"/>
    <property type="evidence" value="ECO:0000318"/>
    <property type="project" value="GO_Central"/>
</dbReference>
<dbReference type="GO" id="GO:0008013">
    <property type="term" value="F:beta-catenin binding"/>
    <property type="evidence" value="ECO:0000318"/>
    <property type="project" value="GO_Central"/>
</dbReference>
<dbReference type="GO" id="GO:0060090">
    <property type="term" value="F:molecular adaptor activity"/>
    <property type="evidence" value="ECO:0000318"/>
    <property type="project" value="GO_Central"/>
</dbReference>
<dbReference type="GO" id="GO:0019901">
    <property type="term" value="F:protein kinase binding"/>
    <property type="evidence" value="ECO:0000318"/>
    <property type="project" value="GO_Central"/>
</dbReference>
<dbReference type="GO" id="GO:0031625">
    <property type="term" value="F:ubiquitin protein ligase binding"/>
    <property type="evidence" value="ECO:0000318"/>
    <property type="project" value="GO_Central"/>
</dbReference>
<dbReference type="GO" id="GO:1990756">
    <property type="term" value="F:ubiquitin-like ligase-substrate adaptor activity"/>
    <property type="evidence" value="ECO:0000314"/>
    <property type="project" value="WormBase"/>
</dbReference>
<dbReference type="GO" id="GO:0009948">
    <property type="term" value="P:anterior/posterior axis specification"/>
    <property type="evidence" value="ECO:0000315"/>
    <property type="project" value="UniProtKB"/>
</dbReference>
<dbReference type="GO" id="GO:0009952">
    <property type="term" value="P:anterior/posterior pattern specification"/>
    <property type="evidence" value="ECO:0000315"/>
    <property type="project" value="WormBase"/>
</dbReference>
<dbReference type="GO" id="GO:0007411">
    <property type="term" value="P:axon guidance"/>
    <property type="evidence" value="ECO:0000315"/>
    <property type="project" value="UniProtKB"/>
</dbReference>
<dbReference type="GO" id="GO:0060070">
    <property type="term" value="P:canonical Wnt signaling pathway"/>
    <property type="evidence" value="ECO:0000315"/>
    <property type="project" value="UniProtKB"/>
</dbReference>
<dbReference type="GO" id="GO:0048468">
    <property type="term" value="P:cell development"/>
    <property type="evidence" value="ECO:0000318"/>
    <property type="project" value="GO_Central"/>
</dbReference>
<dbReference type="GO" id="GO:0090090">
    <property type="term" value="P:negative regulation of canonical Wnt signaling pathway"/>
    <property type="evidence" value="ECO:0000318"/>
    <property type="project" value="GO_Central"/>
</dbReference>
<dbReference type="GO" id="GO:0040027">
    <property type="term" value="P:negative regulation of vulval development"/>
    <property type="evidence" value="ECO:0000315"/>
    <property type="project" value="WormBase"/>
</dbReference>
<dbReference type="GO" id="GO:0030178">
    <property type="term" value="P:negative regulation of Wnt signaling pathway"/>
    <property type="evidence" value="ECO:0000316"/>
    <property type="project" value="UniProtKB"/>
</dbReference>
<dbReference type="GO" id="GO:0032436">
    <property type="term" value="P:positive regulation of proteasomal ubiquitin-dependent protein catabolic process"/>
    <property type="evidence" value="ECO:0000318"/>
    <property type="project" value="GO_Central"/>
</dbReference>
<dbReference type="GO" id="GO:0043161">
    <property type="term" value="P:proteasome-mediated ubiquitin-dependent protein catabolic process"/>
    <property type="evidence" value="ECO:0000314"/>
    <property type="project" value="WormBase"/>
</dbReference>
<dbReference type="GO" id="GO:0042659">
    <property type="term" value="P:regulation of cell fate specification"/>
    <property type="evidence" value="ECO:0000315"/>
    <property type="project" value="WormBase"/>
</dbReference>
<dbReference type="GO" id="GO:0032880">
    <property type="term" value="P:regulation of protein localization"/>
    <property type="evidence" value="ECO:0000315"/>
    <property type="project" value="UniProtKB"/>
</dbReference>
<dbReference type="Gene3D" id="2.40.240.130">
    <property type="match status" value="1"/>
</dbReference>
<dbReference type="Gene3D" id="1.10.167.10">
    <property type="entry name" value="Regulator of G-protein Signalling 4, domain 2"/>
    <property type="match status" value="1"/>
</dbReference>
<dbReference type="InterPro" id="IPR043581">
    <property type="entry name" value="Axin-like"/>
</dbReference>
<dbReference type="InterPro" id="IPR001158">
    <property type="entry name" value="DIX"/>
</dbReference>
<dbReference type="InterPro" id="IPR038207">
    <property type="entry name" value="DIX_dom_sf"/>
</dbReference>
<dbReference type="InterPro" id="IPR016137">
    <property type="entry name" value="RGS"/>
</dbReference>
<dbReference type="InterPro" id="IPR036305">
    <property type="entry name" value="RGS_sf"/>
</dbReference>
<dbReference type="InterPro" id="IPR044926">
    <property type="entry name" value="RGS_subdomain_2"/>
</dbReference>
<dbReference type="InterPro" id="IPR029071">
    <property type="entry name" value="Ubiquitin-like_domsf"/>
</dbReference>
<dbReference type="PANTHER" id="PTHR46102">
    <property type="entry name" value="AXIN"/>
    <property type="match status" value="1"/>
</dbReference>
<dbReference type="PANTHER" id="PTHR46102:SF2">
    <property type="entry name" value="AXIN"/>
    <property type="match status" value="1"/>
</dbReference>
<dbReference type="Pfam" id="PF00778">
    <property type="entry name" value="DIX"/>
    <property type="match status" value="1"/>
</dbReference>
<dbReference type="Pfam" id="PF00615">
    <property type="entry name" value="RGS"/>
    <property type="match status" value="1"/>
</dbReference>
<dbReference type="SMART" id="SM00315">
    <property type="entry name" value="RGS"/>
    <property type="match status" value="1"/>
</dbReference>
<dbReference type="SUPFAM" id="SSF48097">
    <property type="entry name" value="Regulator of G-protein signaling, RGS"/>
    <property type="match status" value="1"/>
</dbReference>
<dbReference type="SUPFAM" id="SSF54236">
    <property type="entry name" value="Ubiquitin-like"/>
    <property type="match status" value="1"/>
</dbReference>
<dbReference type="PROSITE" id="PS50841">
    <property type="entry name" value="DIX"/>
    <property type="match status" value="1"/>
</dbReference>
<dbReference type="PROSITE" id="PS50132">
    <property type="entry name" value="RGS"/>
    <property type="match status" value="1"/>
</dbReference>
<comment type="function">
    <text evidence="4 5 6 7 8 9 10">Works in parallel with axl-1 in negatively regulating bar-1 signaling in vulval precursor cells and Q neuroblasts. Inhibits Wnt signaling, which affects tissue specific expression of Hox genes, egl-5, lin-39 and mab-5. This in turn affects QR (postembryonic neuroblast) cell migration, vulval cell fate specification, and the development of sensory structures by the seam cell lineage. Has a role in alae V cell patterning, ray formation in the male tail and axon guidance. Does not affect B cell polarity.</text>
</comment>
<comment type="subunit">
    <text evidence="4 9">Interacts (via N-terminus) with apr-1 (via C-terminus). Interacts with bar-1 (via ARM repeats), gsk-3, and mig-5.</text>
</comment>
<comment type="interaction">
    <interactant intactId="EBI-2917690">
        <id>O62090</id>
    </interactant>
    <interactant intactId="EBI-2528850">
        <id>Q18825</id>
        <label>bar-1</label>
    </interactant>
    <organismsDiffer>false</organismsDiffer>
    <experiments>3</experiments>
</comment>
<comment type="interaction">
    <interactant intactId="EBI-2917690">
        <id>O62090</id>
    </interactant>
    <interactant intactId="EBI-330089">
        <id>Q9U2Q9</id>
        <label>gsk-3</label>
    </interactant>
    <organismsDiffer>false</organismsDiffer>
    <experiments>6</experiments>
</comment>
<comment type="interaction">
    <interactant intactId="EBI-2917690">
        <id>O62090</id>
    </interactant>
    <interactant intactId="EBI-316403">
        <id>Q22227</id>
        <label>mig-5</label>
    </interactant>
    <organismsDiffer>false</organismsDiffer>
    <experiments>4</experiments>
</comment>
<comment type="subcellular location">
    <subcellularLocation>
        <location evidence="4 5">Cell membrane</location>
    </subcellularLocation>
    <subcellularLocation>
        <location evidence="4 5">Nucleus</location>
    </subcellularLocation>
    <subcellularLocation>
        <location evidence="4 5">Cytoplasm</location>
        <location evidence="4 5">Cell cortex</location>
    </subcellularLocation>
    <text evidence="4 5">Subcellular location was measured using a GFP reporter gene. Location of the pry-1:GFP fusion protein ranges from plasma membrane and cytoplasmic dots to diffuse cytoplasmic and nuclear staining. This difference may be due to variations in expression levels of the fusion protein in different transgenic lines.</text>
</comment>
<comment type="tissue specificity">
    <text evidence="4">Expressed in hypodermal cells (seam cells) V5 and V6, Q neuroblasts, ventral hypodermal cells P7/8 to P11/12, body wall muscle cells and neurons in the head, the tail and the ventral nerve cord.</text>
</comment>
<comment type="developmental stage">
    <text evidence="4">Expressed throughout development.</text>
</comment>
<comment type="disruption phenotype">
    <text evidence="10">Worms exhibit ectopic rays and lack alae in V cells of the male tail. Mutants appear scrawny, often herniated, uncoordinated, show defects in dorsal and ventral cord fasciculation, commissure guidance defects, and over activated Wnt signaling pathway. Phenotypes are more penetrant in the pry-1 and axl-1 double mutant, suggesting some functional overlaps.</text>
</comment>
<organism>
    <name type="scientific">Caenorhabditis elegans</name>
    <dbReference type="NCBI Taxonomy" id="6239"/>
    <lineage>
        <taxon>Eukaryota</taxon>
        <taxon>Metazoa</taxon>
        <taxon>Ecdysozoa</taxon>
        <taxon>Nematoda</taxon>
        <taxon>Chromadorea</taxon>
        <taxon>Rhabditida</taxon>
        <taxon>Rhabditina</taxon>
        <taxon>Rhabditomorpha</taxon>
        <taxon>Rhabditoidea</taxon>
        <taxon>Rhabditidae</taxon>
        <taxon>Peloderinae</taxon>
        <taxon>Caenorhabditis</taxon>
    </lineage>
</organism>
<keyword id="KW-1003">Cell membrane</keyword>
<keyword id="KW-0963">Cytoplasm</keyword>
<keyword id="KW-0217">Developmental protein</keyword>
<keyword id="KW-0472">Membrane</keyword>
<keyword id="KW-0539">Nucleus</keyword>
<keyword id="KW-1185">Reference proteome</keyword>
<keyword id="KW-0879">Wnt signaling pathway</keyword>
<reference evidence="12 13" key="1">
    <citation type="journal article" date="2002" name="Genes Dev.">
        <title>The axin-like protein PRY-1 is a negative regulator of a canonical Wnt pathway in C. elegans.</title>
        <authorList>
            <person name="Korswagen H.C."/>
            <person name="Coudreuse D.Y.M."/>
            <person name="Betist M.C."/>
            <person name="van de Water S."/>
            <person name="Zivkovic D."/>
            <person name="Clevers H.C."/>
        </authorList>
    </citation>
    <scope>NUCLEOTIDE SEQUENCE [MRNA]</scope>
    <scope>FUNCTION</scope>
    <scope>INTERACTION WITH APR-1; BAR-1; GSK-3 AND MIG-5</scope>
    <scope>SUBCELLULAR LOCATION</scope>
    <scope>TISSUE SPECIFICITY</scope>
    <scope>DEVELOPMENTAL STAGE</scope>
</reference>
<reference key="2">
    <citation type="journal article" date="1998" name="Science">
        <title>Genome sequence of the nematode C. elegans: a platform for investigating biology.</title>
        <authorList>
            <consortium name="The C. elegans sequencing consortium"/>
        </authorList>
    </citation>
    <scope>NUCLEOTIDE SEQUENCE [LARGE SCALE GENOMIC DNA]</scope>
    <source>
        <strain>Bristol N2</strain>
    </source>
</reference>
<reference evidence="12" key="3">
    <citation type="journal article" date="1999" name="Development">
        <title>A Wnt signaling pathway controls hox gene expression and neuroblast migration in C. elegans.</title>
        <authorList>
            <person name="Maloof J.N."/>
            <person name="Whangbo J."/>
            <person name="Harris J.M."/>
            <person name="Jongeward G.D."/>
            <person name="Kenyon C."/>
        </authorList>
    </citation>
    <scope>FUNCTION</scope>
    <scope>DISRUPTION PHENOTYPE</scope>
</reference>
<reference evidence="12" key="4">
    <citation type="journal article" date="2005" name="Genes Dev.">
        <title>Wnt signaling drives WRM-1/beta-catenin asymmetries in early C. elegans embryos.</title>
        <authorList>
            <person name="Nakamura K."/>
            <person name="Kim S."/>
            <person name="Ishidate T."/>
            <person name="Bei Y."/>
            <person name="Pang K."/>
            <person name="Shirayama M."/>
            <person name="Trzepacz C."/>
            <person name="Brownell D.R."/>
            <person name="Mello C.C."/>
        </authorList>
    </citation>
    <scope>FUNCTION</scope>
    <scope>SUBCELLULAR LOCATION</scope>
</reference>
<reference evidence="12" key="5">
    <citation type="journal article" date="2006" name="Dev. Biol.">
        <title>A novel noncanonical Wnt pathway is involved in the regulation of the asymmetric B cell division in C. elegans.</title>
        <authorList>
            <person name="Wu M."/>
            <person name="Herman M.A."/>
        </authorList>
    </citation>
    <scope>FUNCTION</scope>
</reference>
<reference evidence="12" key="6">
    <citation type="journal article" date="2007" name="Dev. Cell">
        <title>Cortical beta-catenin and APC regulate asymmetric nuclear beta-catenin localization during asymmetric cell division in C. elegans.</title>
        <authorList>
            <person name="Mizumoto K."/>
            <person name="Sawa H."/>
        </authorList>
    </citation>
    <scope>FUNCTION</scope>
</reference>
<reference evidence="12" key="7">
    <citation type="journal article" date="2007" name="Dev. Biol.">
        <title>Two functionally distinct axin-like proteins regulate canonical Wnt signaling in C. elegans.</title>
        <authorList>
            <person name="Oosterveen T."/>
            <person name="Coudreuse D.Y.M."/>
            <person name="Yang P.-T."/>
            <person name="Fraser E."/>
            <person name="Bergsma J."/>
            <person name="Dale T.C."/>
            <person name="Korswagen H.C."/>
        </authorList>
    </citation>
    <scope>FUNCTION</scope>
    <scope>INTERACTION WITH GSK-3</scope>
</reference>
<reference evidence="12" key="8">
    <citation type="journal article" date="2007" name="Proc. Natl. Acad. Sci. U.S.A.">
        <title>Axon guidance genes identified in a large-scale RNAi screen using the RNAi-hypersensitive Caenorhabditis elegans strain nre-1(hd20) lin-15b(hd126).</title>
        <authorList>
            <person name="Schmitz C."/>
            <person name="Kinge P."/>
            <person name="Hutter H."/>
        </authorList>
    </citation>
    <scope>FUNCTION</scope>
</reference>
<proteinExistence type="evidence at protein level"/>
<accession>O62090</accession>
<evidence type="ECO:0000255" key="1">
    <source>
        <dbReference type="PROSITE-ProRule" id="PRU00069"/>
    </source>
</evidence>
<evidence type="ECO:0000255" key="2">
    <source>
        <dbReference type="PROSITE-ProRule" id="PRU00171"/>
    </source>
</evidence>
<evidence type="ECO:0000256" key="3">
    <source>
        <dbReference type="SAM" id="MobiDB-lite"/>
    </source>
</evidence>
<evidence type="ECO:0000269" key="4">
    <source>
    </source>
</evidence>
<evidence type="ECO:0000269" key="5">
    <source>
    </source>
</evidence>
<evidence type="ECO:0000269" key="6">
    <source>
    </source>
</evidence>
<evidence type="ECO:0000269" key="7">
    <source>
    </source>
</evidence>
<evidence type="ECO:0000269" key="8">
    <source>
    </source>
</evidence>
<evidence type="ECO:0000269" key="9">
    <source>
    </source>
</evidence>
<evidence type="ECO:0000269" key="10">
    <source>
    </source>
</evidence>
<evidence type="ECO:0000303" key="11">
    <source>
    </source>
</evidence>
<evidence type="ECO:0000305" key="12"/>
<evidence type="ECO:0000312" key="13">
    <source>
        <dbReference type="EMBL" id="AAL77082.1"/>
    </source>
</evidence>
<evidence type="ECO:0000312" key="14">
    <source>
        <dbReference type="WormBase" id="C37A5.9"/>
    </source>
</evidence>
<protein>
    <recommendedName>
        <fullName>Axin-like protein pry-1</fullName>
    </recommendedName>
    <alternativeName>
        <fullName evidence="11">Protein polyray</fullName>
    </alternativeName>
</protein>
<sequence>METHLGWARSLEAVLSDRSALDAFQEWLIEYSSPQYLDLFFAIRAYERMALEGKPEKSQLSKSIYSKFLSSRTGNCEAIPKHFRAPIGEKLRHGTELEDRVFSHCSNFVQEFLRRQHEEFVGSEEFIEAFNKMSSTTADQLPGGSAHHSSHQNTMRRSSGTTSRKSAAQIATQLTAEALLKSKHDRHSKLGETKLEKMYPPTRQPYVCNATTSHNDSAVSSTFSGDTPEAHRMHSNRLRHIRDEQARENHGTMTLPRVEKASVDGQQWDHSSESGRRNFAMEITRKLLRHIDKVKLNDEMEKRIDDIEECRYTTIDMVNGTEPNDDLGKIDEDEELDDYLKMKMTDDSQKGSTNRSPKGPAGEPNKSGEGSKNTTLSPTNRAPAQLHNTIRVPRRKDYPRDTSASLKSHRHHQIDTNRMMSQSMCAPSYSSASSSYSRDSFAPAPTTRVNFAPGSSKSSQFYDSSGIGSMAPSAFSATSSLDYKDRRQHRKAPTPKKHSKIGKNLSNLITISYLGTDKIPVVTHVPNDGPMTLAEFKRHFALPNGAHQLFFKTECEDGSAPFQLLLIKDEHHLLPVFEGRIAAELR</sequence>